<protein>
    <recommendedName>
        <fullName evidence="1">Photosystem II extrinsic protein V</fullName>
        <shortName evidence="1">PsbV</shortName>
    </recommendedName>
    <alternativeName>
        <fullName evidence="1">Cytochrome c-550</fullName>
    </alternativeName>
    <alternativeName>
        <fullName evidence="1">Cytochrome c550</fullName>
    </alternativeName>
</protein>
<accession>O78454</accession>
<dbReference type="EMBL" id="AF041468">
    <property type="protein sequence ID" value="AAC35645.1"/>
    <property type="molecule type" value="Genomic_DNA"/>
</dbReference>
<dbReference type="RefSeq" id="NP_050711.1">
    <property type="nucleotide sequence ID" value="NC_000926.1"/>
</dbReference>
<dbReference type="SMR" id="O78454"/>
<dbReference type="GeneID" id="857012"/>
<dbReference type="HOGENOM" id="CLU_104149_1_0_1"/>
<dbReference type="OMA" id="GTCHAGG"/>
<dbReference type="GO" id="GO:0009535">
    <property type="term" value="C:chloroplast thylakoid membrane"/>
    <property type="evidence" value="ECO:0007669"/>
    <property type="project" value="UniProtKB-SubCell"/>
</dbReference>
<dbReference type="GO" id="GO:0009523">
    <property type="term" value="C:photosystem II"/>
    <property type="evidence" value="ECO:0007669"/>
    <property type="project" value="UniProtKB-KW"/>
</dbReference>
<dbReference type="GO" id="GO:0009055">
    <property type="term" value="F:electron transfer activity"/>
    <property type="evidence" value="ECO:0007669"/>
    <property type="project" value="InterPro"/>
</dbReference>
<dbReference type="GO" id="GO:0020037">
    <property type="term" value="F:heme binding"/>
    <property type="evidence" value="ECO:0007669"/>
    <property type="project" value="InterPro"/>
</dbReference>
<dbReference type="GO" id="GO:0005506">
    <property type="term" value="F:iron ion binding"/>
    <property type="evidence" value="ECO:0007669"/>
    <property type="project" value="InterPro"/>
</dbReference>
<dbReference type="GO" id="GO:0019684">
    <property type="term" value="P:photosynthesis, light reaction"/>
    <property type="evidence" value="ECO:0007669"/>
    <property type="project" value="UniProtKB-UniRule"/>
</dbReference>
<dbReference type="GO" id="GO:0022904">
    <property type="term" value="P:respiratory electron transport chain"/>
    <property type="evidence" value="ECO:0007669"/>
    <property type="project" value="InterPro"/>
</dbReference>
<dbReference type="Gene3D" id="1.10.760.10">
    <property type="entry name" value="Cytochrome c-like domain"/>
    <property type="match status" value="1"/>
</dbReference>
<dbReference type="HAMAP" id="MF_01378">
    <property type="entry name" value="PSII_Cyt550"/>
    <property type="match status" value="1"/>
</dbReference>
<dbReference type="InterPro" id="IPR009056">
    <property type="entry name" value="Cyt_c-like_dom"/>
</dbReference>
<dbReference type="InterPro" id="IPR036909">
    <property type="entry name" value="Cyt_c-like_dom_sf"/>
</dbReference>
<dbReference type="InterPro" id="IPR029490">
    <property type="entry name" value="Cytochrom_C550"/>
</dbReference>
<dbReference type="InterPro" id="IPR017851">
    <property type="entry name" value="PsbV_cyt_c550"/>
</dbReference>
<dbReference type="InterPro" id="IPR016003">
    <property type="entry name" value="PsbV_cyt_c550-like"/>
</dbReference>
<dbReference type="NCBIfam" id="TIGR03045">
    <property type="entry name" value="PS_II_C550"/>
    <property type="match status" value="1"/>
</dbReference>
<dbReference type="Pfam" id="PF14495">
    <property type="entry name" value="Cytochrom_C550"/>
    <property type="match status" value="1"/>
</dbReference>
<dbReference type="PIRSF" id="PIRSF005890">
    <property type="entry name" value="Phot_II_cyt_c550"/>
    <property type="match status" value="1"/>
</dbReference>
<dbReference type="SUPFAM" id="SSF46626">
    <property type="entry name" value="Cytochrome c"/>
    <property type="match status" value="1"/>
</dbReference>
<dbReference type="PROSITE" id="PS51007">
    <property type="entry name" value="CYTC"/>
    <property type="match status" value="1"/>
</dbReference>
<comment type="function">
    <text evidence="1">One of the extrinsic, lumenal subunits of photosystem II (PSII). PSII is a light-driven water plastoquinone oxidoreductase, using light energy to abstract electrons from H(2)O, generating a proton gradient subsequently used for ATP formation. The extrinsic proteins stabilize the structure of photosystem II oxygen-evolving complex (OEC), the ion environment of oxygen evolution and protect the OEC against heat-induced inactivation.</text>
</comment>
<comment type="cofactor">
    <cofactor evidence="1">
        <name>heme c</name>
        <dbReference type="ChEBI" id="CHEBI:61717"/>
    </cofactor>
    <text evidence="1">Binds 1 heme c group covalently per subunit.</text>
</comment>
<comment type="subunit">
    <text evidence="1">PSII is composed of 1 copy each of membrane proteins PsbA, PsbB, PsbC, PsbD, PsbE, PsbF, PsbH, PsbI, PsbJ, PsbK, PsbL, PsbM, PsbT, PsbX, PsbY, PsbZ, Psb30/Ycf12, at least 3 peripheral proteins of the oxygen-evolving complex and a large number of cofactors. It forms dimeric complexes.</text>
</comment>
<comment type="subcellular location">
    <subcellularLocation>
        <location evidence="1">Plastid</location>
        <location evidence="1">Chloroplast thylakoid membrane</location>
        <topology evidence="1">Peripheral membrane protein</topology>
        <orientation evidence="1">Lumenal side</orientation>
    </subcellularLocation>
    <text evidence="1">Associated with photosystem II at the lumenal side of the thylakoid membrane.</text>
</comment>
<comment type="similarity">
    <text evidence="1">Belongs to the cytochrome c family. PsbV subfamily.</text>
</comment>
<keyword id="KW-0150">Chloroplast</keyword>
<keyword id="KW-0249">Electron transport</keyword>
<keyword id="KW-0349">Heme</keyword>
<keyword id="KW-0408">Iron</keyword>
<keyword id="KW-0472">Membrane</keyword>
<keyword id="KW-0479">Metal-binding</keyword>
<keyword id="KW-0602">Photosynthesis</keyword>
<keyword id="KW-0604">Photosystem II</keyword>
<keyword id="KW-0934">Plastid</keyword>
<keyword id="KW-0732">Signal</keyword>
<keyword id="KW-0793">Thylakoid</keyword>
<keyword id="KW-0813">Transport</keyword>
<evidence type="ECO:0000255" key="1">
    <source>
        <dbReference type="HAMAP-Rule" id="MF_01378"/>
    </source>
</evidence>
<organism>
    <name type="scientific">Guillardia theta</name>
    <name type="common">Cryptophyte</name>
    <name type="synonym">Cryptomonas phi</name>
    <dbReference type="NCBI Taxonomy" id="55529"/>
    <lineage>
        <taxon>Eukaryota</taxon>
        <taxon>Cryptophyceae</taxon>
        <taxon>Pyrenomonadales</taxon>
        <taxon>Geminigeraceae</taxon>
        <taxon>Guillardia</taxon>
    </lineage>
</organism>
<sequence length="162" mass="17777">MFKKFSALFTLLFTLCLVNPMLVYSIDLDENTRSVPLDDAGNTVILTPEQVKRGKRLFNASCGQCHVGGITKTNPNLGLEPDALSLATPARDNINALVDYMKNPTSYDGLESIAEVHPSIKSADIFPKMRSLSDEDLFAIGGHILLQPKLSSEKWGGGKIYY</sequence>
<name>CY550_GUITH</name>
<proteinExistence type="inferred from homology"/>
<geneLocation type="chloroplast"/>
<reference key="1">
    <citation type="journal article" date="1999" name="J. Mol. Evol.">
        <title>The plastid genome of the cryptophyte alga, Guillardia theta: complete sequence and conserved synteny groups confirm its common ancestry with red algae.</title>
        <authorList>
            <person name="Douglas S.E."/>
            <person name="Penny S.L."/>
        </authorList>
    </citation>
    <scope>NUCLEOTIDE SEQUENCE [LARGE SCALE GENOMIC DNA]</scope>
</reference>
<gene>
    <name evidence="1" type="primary">psbV</name>
</gene>
<feature type="signal peptide" evidence="1">
    <location>
        <begin position="1"/>
        <end position="25"/>
    </location>
</feature>
<feature type="chain" id="PRO_0000006515" description="Photosystem II extrinsic protein V">
    <location>
        <begin position="26"/>
        <end position="162"/>
    </location>
</feature>
<feature type="binding site" description="covalent" evidence="1">
    <location>
        <position position="62"/>
    </location>
    <ligand>
        <name>heme c</name>
        <dbReference type="ChEBI" id="CHEBI:61717"/>
    </ligand>
</feature>
<feature type="binding site" description="covalent" evidence="1">
    <location>
        <position position="65"/>
    </location>
    <ligand>
        <name>heme c</name>
        <dbReference type="ChEBI" id="CHEBI:61717"/>
    </ligand>
</feature>
<feature type="binding site" description="axial binding residue" evidence="1">
    <location>
        <position position="66"/>
    </location>
    <ligand>
        <name>heme c</name>
        <dbReference type="ChEBI" id="CHEBI:61717"/>
    </ligand>
    <ligandPart>
        <name>Fe</name>
        <dbReference type="ChEBI" id="CHEBI:18248"/>
    </ligandPart>
</feature>
<feature type="binding site" description="axial binding residue" evidence="1">
    <location>
        <position position="117"/>
    </location>
    <ligand>
        <name>heme c</name>
        <dbReference type="ChEBI" id="CHEBI:61717"/>
    </ligand>
    <ligandPart>
        <name>Fe</name>
        <dbReference type="ChEBI" id="CHEBI:18248"/>
    </ligandPart>
</feature>